<sequence length="234" mass="26102">MERTSKYAEAIDTASQPETVIRASSVTGQQGHLNSVDMPLVETWRPEGPRASQQNHILLSPEQEVSQSSNTSPTSESDPQAFLEASEFPQNQTKTSRVDPVHMEIDDWAAIDQPMADSAQPDFEDWGDLGDLMPEVLPESSGTSSGAATDNGTAADDENRCWDHGCNGKKFLNHSNLVRHRRENGSARPKFICPMCGAYFSRSTARNQHLEKKSCNRVRRYSNGRERPRLRVKD</sequence>
<organism>
    <name type="scientific">Cochliobolus lunatus</name>
    <name type="common">Filamentous fungus</name>
    <name type="synonym">Curvularia lunata</name>
    <dbReference type="NCBI Taxonomy" id="5503"/>
    <lineage>
        <taxon>Eukaryota</taxon>
        <taxon>Fungi</taxon>
        <taxon>Dikarya</taxon>
        <taxon>Ascomycota</taxon>
        <taxon>Pezizomycotina</taxon>
        <taxon>Dothideomycetes</taxon>
        <taxon>Pleosporomycetidae</taxon>
        <taxon>Pleosporales</taxon>
        <taxon>Pleosporineae</taxon>
        <taxon>Pleosporaceae</taxon>
        <taxon>Curvularia</taxon>
    </lineage>
</organism>
<accession>A0A345BJN6</accession>
<evidence type="ECO:0000255" key="1">
    <source>
        <dbReference type="PROSITE-ProRule" id="PRU00042"/>
    </source>
</evidence>
<evidence type="ECO:0000256" key="2">
    <source>
        <dbReference type="SAM" id="MobiDB-lite"/>
    </source>
</evidence>
<evidence type="ECO:0000303" key="3">
    <source>
    </source>
</evidence>
<evidence type="ECO:0000305" key="4"/>
<evidence type="ECO:0000305" key="5">
    <source>
    </source>
</evidence>
<protein>
    <recommendedName>
        <fullName evidence="3">C2H2-type zinc-finger transcription factor clz7</fullName>
    </recommendedName>
    <alternativeName>
        <fullName evidence="3">Squalestatin S1 biosynthesis cluster protein clz2</fullName>
    </alternativeName>
    <alternativeName>
        <fullName evidence="3">Zaragozic acid A biosynthesis cluster protein 7</fullName>
    </alternativeName>
</protein>
<dbReference type="EMBL" id="MF806533">
    <property type="protein sequence ID" value="AXF50649.1"/>
    <property type="molecule type" value="Genomic_DNA"/>
</dbReference>
<dbReference type="SMR" id="A0A345BJN6"/>
<dbReference type="GO" id="GO:0005634">
    <property type="term" value="C:nucleus"/>
    <property type="evidence" value="ECO:0007669"/>
    <property type="project" value="UniProtKB-SubCell"/>
</dbReference>
<dbReference type="GO" id="GO:0008270">
    <property type="term" value="F:zinc ion binding"/>
    <property type="evidence" value="ECO:0007669"/>
    <property type="project" value="UniProtKB-KW"/>
</dbReference>
<dbReference type="Gene3D" id="3.30.160.60">
    <property type="entry name" value="Classic Zinc Finger"/>
    <property type="match status" value="1"/>
</dbReference>
<dbReference type="InterPro" id="IPR036236">
    <property type="entry name" value="Znf_C2H2_sf"/>
</dbReference>
<dbReference type="SUPFAM" id="SSF57667">
    <property type="entry name" value="beta-beta-alpha zinc fingers"/>
    <property type="match status" value="1"/>
</dbReference>
<reference key="1">
    <citation type="journal article" date="2017" name="Org. Lett.">
        <title>Identification and heterologous production of a benzoyl-primed tricarboxylic acid polyketide intermediate from the zaragozic acid A biosynthetic pathway.</title>
        <authorList>
            <person name="Liu N."/>
            <person name="Hung Y.S."/>
            <person name="Gao S.S."/>
            <person name="Hang L."/>
            <person name="Zou Y."/>
            <person name="Chooi Y.H."/>
            <person name="Tang Y."/>
        </authorList>
    </citation>
    <scope>NUCLEOTIDE SEQUENCE [GENOMIC DNA]</scope>
    <scope>FUNCTION</scope>
    <source>
        <strain>ATCC 74067</strain>
    </source>
</reference>
<proteinExistence type="inferred from homology"/>
<keyword id="KW-0479">Metal-binding</keyword>
<keyword id="KW-0539">Nucleus</keyword>
<keyword id="KW-0677">Repeat</keyword>
<keyword id="KW-0804">Transcription</keyword>
<keyword id="KW-0805">Transcription regulation</keyword>
<keyword id="KW-0862">Zinc</keyword>
<keyword id="KW-0863">Zinc-finger</keyword>
<comment type="function">
    <text evidence="5">Transcription factor that probably regulates the expression of the gene cluster that mediates the biosynthesis of squalestatin S1 (SQS1, also known as zaragozic acid A), a heavily oxidized fungal polyketide that offers potent cholesterol lowering activity by targeting squalene synthase (SS).</text>
</comment>
<comment type="subcellular location">
    <subcellularLocation>
        <location evidence="4">Nucleus</location>
    </subcellularLocation>
</comment>
<comment type="similarity">
    <text evidence="4">Belongs to the GLI C2H2-type zinc-finger protein family.</text>
</comment>
<feature type="chain" id="PRO_0000452632" description="C2H2-type zinc-finger transcription factor clz7">
    <location>
        <begin position="1"/>
        <end position="234"/>
    </location>
</feature>
<feature type="zinc finger region" description="C2H2-type 1; degenerate" evidence="1">
    <location>
        <begin position="159"/>
        <end position="184"/>
    </location>
</feature>
<feature type="zinc finger region" description="C2H2-type 2; degenerate" evidence="1">
    <location>
        <begin position="191"/>
        <end position="223"/>
    </location>
</feature>
<feature type="region of interest" description="Disordered" evidence="2">
    <location>
        <begin position="45"/>
        <end position="99"/>
    </location>
</feature>
<feature type="region of interest" description="Disordered" evidence="2">
    <location>
        <begin position="118"/>
        <end position="154"/>
    </location>
</feature>
<feature type="compositionally biased region" description="Low complexity" evidence="2">
    <location>
        <begin position="66"/>
        <end position="77"/>
    </location>
</feature>
<feature type="compositionally biased region" description="Low complexity" evidence="2">
    <location>
        <begin position="140"/>
        <end position="154"/>
    </location>
</feature>
<name>CLZ7_COCLU</name>
<gene>
    <name evidence="3" type="primary">clz7</name>
</gene>